<name>NADK2_STRAW</name>
<organism>
    <name type="scientific">Streptomyces avermitilis (strain ATCC 31267 / DSM 46492 / JCM 5070 / NBRC 14893 / NCIMB 12804 / NRRL 8165 / MA-4680)</name>
    <dbReference type="NCBI Taxonomy" id="227882"/>
    <lineage>
        <taxon>Bacteria</taxon>
        <taxon>Bacillati</taxon>
        <taxon>Actinomycetota</taxon>
        <taxon>Actinomycetes</taxon>
        <taxon>Kitasatosporales</taxon>
        <taxon>Streptomycetaceae</taxon>
        <taxon>Streptomyces</taxon>
    </lineage>
</organism>
<protein>
    <recommendedName>
        <fullName evidence="1">NAD kinase 2</fullName>
        <ecNumber evidence="1">2.7.1.23</ecNumber>
    </recommendedName>
    <alternativeName>
        <fullName evidence="1">ATP-dependent NAD kinase 2</fullName>
    </alternativeName>
</protein>
<dbReference type="EC" id="2.7.1.23" evidence="1"/>
<dbReference type="EMBL" id="BA000030">
    <property type="protein sequence ID" value="BAC74208.1"/>
    <property type="molecule type" value="Genomic_DNA"/>
</dbReference>
<dbReference type="RefSeq" id="WP_010987897.1">
    <property type="nucleotide sequence ID" value="NZ_JZJK01000082.1"/>
</dbReference>
<dbReference type="SMR" id="Q829B4"/>
<dbReference type="GeneID" id="41543572"/>
<dbReference type="KEGG" id="sma:SAVERM_6497"/>
<dbReference type="eggNOG" id="COG0061">
    <property type="taxonomic scope" value="Bacteria"/>
</dbReference>
<dbReference type="HOGENOM" id="CLU_008831_0_0_11"/>
<dbReference type="OrthoDB" id="9774737at2"/>
<dbReference type="Proteomes" id="UP000000428">
    <property type="component" value="Chromosome"/>
</dbReference>
<dbReference type="GO" id="GO:0005737">
    <property type="term" value="C:cytoplasm"/>
    <property type="evidence" value="ECO:0007669"/>
    <property type="project" value="UniProtKB-SubCell"/>
</dbReference>
<dbReference type="GO" id="GO:0005524">
    <property type="term" value="F:ATP binding"/>
    <property type="evidence" value="ECO:0007669"/>
    <property type="project" value="UniProtKB-KW"/>
</dbReference>
<dbReference type="GO" id="GO:0046872">
    <property type="term" value="F:metal ion binding"/>
    <property type="evidence" value="ECO:0007669"/>
    <property type="project" value="UniProtKB-UniRule"/>
</dbReference>
<dbReference type="GO" id="GO:0051287">
    <property type="term" value="F:NAD binding"/>
    <property type="evidence" value="ECO:0007669"/>
    <property type="project" value="UniProtKB-ARBA"/>
</dbReference>
<dbReference type="GO" id="GO:0003951">
    <property type="term" value="F:NAD+ kinase activity"/>
    <property type="evidence" value="ECO:0007669"/>
    <property type="project" value="UniProtKB-UniRule"/>
</dbReference>
<dbReference type="GO" id="GO:0019674">
    <property type="term" value="P:NAD metabolic process"/>
    <property type="evidence" value="ECO:0007669"/>
    <property type="project" value="InterPro"/>
</dbReference>
<dbReference type="GO" id="GO:0006741">
    <property type="term" value="P:NADP biosynthetic process"/>
    <property type="evidence" value="ECO:0007669"/>
    <property type="project" value="UniProtKB-UniRule"/>
</dbReference>
<dbReference type="FunFam" id="2.60.200.30:FF:000007">
    <property type="entry name" value="NAD kinase"/>
    <property type="match status" value="1"/>
</dbReference>
<dbReference type="Gene3D" id="3.40.50.10330">
    <property type="entry name" value="Probable inorganic polyphosphate/atp-NAD kinase, domain 1"/>
    <property type="match status" value="1"/>
</dbReference>
<dbReference type="Gene3D" id="2.60.200.30">
    <property type="entry name" value="Probable inorganic polyphosphate/atp-NAD kinase, domain 2"/>
    <property type="match status" value="1"/>
</dbReference>
<dbReference type="HAMAP" id="MF_00361">
    <property type="entry name" value="NAD_kinase"/>
    <property type="match status" value="1"/>
</dbReference>
<dbReference type="InterPro" id="IPR017438">
    <property type="entry name" value="ATP-NAD_kinase_N"/>
</dbReference>
<dbReference type="InterPro" id="IPR017437">
    <property type="entry name" value="ATP-NAD_kinase_PpnK-typ_C"/>
</dbReference>
<dbReference type="InterPro" id="IPR016064">
    <property type="entry name" value="NAD/diacylglycerol_kinase_sf"/>
</dbReference>
<dbReference type="InterPro" id="IPR002504">
    <property type="entry name" value="NADK"/>
</dbReference>
<dbReference type="NCBIfam" id="NF002892">
    <property type="entry name" value="PRK03372.1"/>
    <property type="match status" value="1"/>
</dbReference>
<dbReference type="PANTHER" id="PTHR20275">
    <property type="entry name" value="NAD KINASE"/>
    <property type="match status" value="1"/>
</dbReference>
<dbReference type="PANTHER" id="PTHR20275:SF0">
    <property type="entry name" value="NAD KINASE"/>
    <property type="match status" value="1"/>
</dbReference>
<dbReference type="Pfam" id="PF01513">
    <property type="entry name" value="NAD_kinase"/>
    <property type="match status" value="1"/>
</dbReference>
<dbReference type="Pfam" id="PF20143">
    <property type="entry name" value="NAD_kinase_C"/>
    <property type="match status" value="1"/>
</dbReference>
<dbReference type="SUPFAM" id="SSF111331">
    <property type="entry name" value="NAD kinase/diacylglycerol kinase-like"/>
    <property type="match status" value="1"/>
</dbReference>
<gene>
    <name evidence="1" type="primary">nadK2</name>
    <name type="ordered locus">SAV_6497</name>
</gene>
<comment type="function">
    <text evidence="1">Involved in the regulation of the intracellular balance of NAD and NADP, and is a key enzyme in the biosynthesis of NADP. Catalyzes specifically the phosphorylation on 2'-hydroxyl of the adenosine moiety of NAD to yield NADP.</text>
</comment>
<comment type="catalytic activity">
    <reaction evidence="1">
        <text>NAD(+) + ATP = ADP + NADP(+) + H(+)</text>
        <dbReference type="Rhea" id="RHEA:18629"/>
        <dbReference type="ChEBI" id="CHEBI:15378"/>
        <dbReference type="ChEBI" id="CHEBI:30616"/>
        <dbReference type="ChEBI" id="CHEBI:57540"/>
        <dbReference type="ChEBI" id="CHEBI:58349"/>
        <dbReference type="ChEBI" id="CHEBI:456216"/>
        <dbReference type="EC" id="2.7.1.23"/>
    </reaction>
</comment>
<comment type="cofactor">
    <cofactor evidence="1">
        <name>a divalent metal cation</name>
        <dbReference type="ChEBI" id="CHEBI:60240"/>
    </cofactor>
</comment>
<comment type="subcellular location">
    <subcellularLocation>
        <location evidence="1">Cytoplasm</location>
    </subcellularLocation>
</comment>
<comment type="similarity">
    <text evidence="1">Belongs to the NAD kinase family.</text>
</comment>
<evidence type="ECO:0000255" key="1">
    <source>
        <dbReference type="HAMAP-Rule" id="MF_00361"/>
    </source>
</evidence>
<keyword id="KW-0067">ATP-binding</keyword>
<keyword id="KW-0963">Cytoplasm</keyword>
<keyword id="KW-0418">Kinase</keyword>
<keyword id="KW-0520">NAD</keyword>
<keyword id="KW-0521">NADP</keyword>
<keyword id="KW-0547">Nucleotide-binding</keyword>
<keyword id="KW-1185">Reference proteome</keyword>
<keyword id="KW-0808">Transferase</keyword>
<feature type="chain" id="PRO_0000120668" description="NAD kinase 2">
    <location>
        <begin position="1"/>
        <end position="301"/>
    </location>
</feature>
<feature type="active site" description="Proton acceptor" evidence="1">
    <location>
        <position position="77"/>
    </location>
</feature>
<feature type="binding site" evidence="1">
    <location>
        <begin position="77"/>
        <end position="78"/>
    </location>
    <ligand>
        <name>NAD(+)</name>
        <dbReference type="ChEBI" id="CHEBI:57540"/>
    </ligand>
</feature>
<feature type="binding site" evidence="1">
    <location>
        <position position="82"/>
    </location>
    <ligand>
        <name>NAD(+)</name>
        <dbReference type="ChEBI" id="CHEBI:57540"/>
    </ligand>
</feature>
<feature type="binding site" evidence="1">
    <location>
        <begin position="151"/>
        <end position="152"/>
    </location>
    <ligand>
        <name>NAD(+)</name>
        <dbReference type="ChEBI" id="CHEBI:57540"/>
    </ligand>
</feature>
<feature type="binding site" evidence="1">
    <location>
        <position position="162"/>
    </location>
    <ligand>
        <name>NAD(+)</name>
        <dbReference type="ChEBI" id="CHEBI:57540"/>
    </ligand>
</feature>
<feature type="binding site" evidence="1">
    <location>
        <position position="181"/>
    </location>
    <ligand>
        <name>NAD(+)</name>
        <dbReference type="ChEBI" id="CHEBI:57540"/>
    </ligand>
</feature>
<feature type="binding site" evidence="1">
    <location>
        <begin position="192"/>
        <end position="197"/>
    </location>
    <ligand>
        <name>NAD(+)</name>
        <dbReference type="ChEBI" id="CHEBI:57540"/>
    </ligand>
</feature>
<reference key="1">
    <citation type="journal article" date="2001" name="Proc. Natl. Acad. Sci. U.S.A.">
        <title>Genome sequence of an industrial microorganism Streptomyces avermitilis: deducing the ability of producing secondary metabolites.</title>
        <authorList>
            <person name="Omura S."/>
            <person name="Ikeda H."/>
            <person name="Ishikawa J."/>
            <person name="Hanamoto A."/>
            <person name="Takahashi C."/>
            <person name="Shinose M."/>
            <person name="Takahashi Y."/>
            <person name="Horikawa H."/>
            <person name="Nakazawa H."/>
            <person name="Osonoe T."/>
            <person name="Kikuchi H."/>
            <person name="Shiba T."/>
            <person name="Sakaki Y."/>
            <person name="Hattori M."/>
        </authorList>
    </citation>
    <scope>NUCLEOTIDE SEQUENCE [LARGE SCALE GENOMIC DNA]</scope>
    <source>
        <strain>ATCC 31267 / DSM 46492 / JCM 5070 / NBRC 14893 / NCIMB 12804 / NRRL 8165 / MA-4680</strain>
    </source>
</reference>
<reference key="2">
    <citation type="journal article" date="2003" name="Nat. Biotechnol.">
        <title>Complete genome sequence and comparative analysis of the industrial microorganism Streptomyces avermitilis.</title>
        <authorList>
            <person name="Ikeda H."/>
            <person name="Ishikawa J."/>
            <person name="Hanamoto A."/>
            <person name="Shinose M."/>
            <person name="Kikuchi H."/>
            <person name="Shiba T."/>
            <person name="Sakaki Y."/>
            <person name="Hattori M."/>
            <person name="Omura S."/>
        </authorList>
    </citation>
    <scope>NUCLEOTIDE SEQUENCE [LARGE SCALE GENOMIC DNA]</scope>
    <source>
        <strain>ATCC 31267 / DSM 46492 / JCM 5070 / NBRC 14893 / NCIMB 12804 / NRRL 8165 / MA-4680</strain>
    </source>
</reference>
<proteinExistence type="inferred from homology"/>
<sequence length="301" mass="32140">MTQTRARTVFLLAHTGRPAAIRSAELVVQGLLRSGLGVRVLEAEAADLPLPDEVELVKEATPQCLDGCELLIVLGGDGTLLRGAEFARASGVPMLGVNLGRVGFLAEAERDDLDKVVDRVVTKAYEVEERMTVDVVVHKNGDIVHTDWALNEAAVQKVSAERLLEVVLEIDGRPVTGFGCDGIVCATPTGSTAYAFSAGGPVVWPEVEALLMVPISAHALFAKPLVTSPNSVLAVEVQPDTPHGVLWCDGRRTVELPQGARVEVRRGAVPVRLARLHHASFTDRLVAKFALPVAGWRGAPH</sequence>
<accession>Q829B4</accession>